<sequence length="171" mass="18807">MQNSTCQAVGECRVPEHAVLPQPLYREVVQFIESLPQKEGHLVTVLHKAQSVFGYLPIEVQQFVADHMEVPLAQVYGVVSFYTFFTMVPKGKYPISVCMGTACFVKGADKVVHAFKEQLKIDIGDVTPDGRFSIDTLRCVGGCALAPIVMVGEKVYGNVTPGQVKKILAEY</sequence>
<keyword id="KW-0001">2Fe-2S</keyword>
<keyword id="KW-0002">3D-structure</keyword>
<keyword id="KW-0408">Iron</keyword>
<keyword id="KW-0411">Iron-sulfur</keyword>
<keyword id="KW-0479">Metal-binding</keyword>
<keyword id="KW-0521">NADP</keyword>
<keyword id="KW-0560">Oxidoreductase</keyword>
<comment type="function">
    <text evidence="3 4">Catalyzes the reduction of NADP in the presence of molecular H(2) to yield NADPH.</text>
</comment>
<comment type="catalytic activity">
    <reaction evidence="4">
        <text>H2 + NADP(+) = NADPH + H(+)</text>
        <dbReference type="Rhea" id="RHEA:18637"/>
        <dbReference type="ChEBI" id="CHEBI:15378"/>
        <dbReference type="ChEBI" id="CHEBI:18276"/>
        <dbReference type="ChEBI" id="CHEBI:57783"/>
        <dbReference type="ChEBI" id="CHEBI:58349"/>
        <dbReference type="EC" id="1.12.1.3"/>
    </reaction>
</comment>
<comment type="cofactor">
    <cofactor evidence="1">
        <name>[2Fe-2S] cluster</name>
        <dbReference type="ChEBI" id="CHEBI:190135"/>
    </cofactor>
    <text evidence="1">Binds 1 [2Fe-2S] cluster.</text>
</comment>
<comment type="activity regulation">
    <text evidence="4">Inhibited by oxygen.</text>
</comment>
<comment type="biophysicochemical properties">
    <kinetics>
        <KM evidence="4">0.09 mM for NADP (at 30 degrees Celsius and at pH 8)</KM>
        <Vmax evidence="4">0.013 umol/min/mg enzyme (at 30 degrees Celsius and at pH 8)</Vmax>
    </kinetics>
    <phDependence>
        <text evidence="4">Optimum pH is 8.</text>
    </phDependence>
</comment>
<comment type="subunit">
    <text evidence="2 4">Heterotetramer composed of HndA, HndB, HndC and HndD subunits. HndA and HndB could form a heterodimeric intermediate in the electron transfer between the active site of hydrogenase subunit HndD and the NADP reduction site of the reducing subunit HndC.</text>
</comment>
<comment type="similarity">
    <text evidence="5">Belongs to the complex I 24 kDa subunit family.</text>
</comment>
<accession>Q46505</accession>
<organism>
    <name type="scientific">Solidesulfovibrio fructosivorans</name>
    <name type="common">Desulfovibrio fructosivorans</name>
    <dbReference type="NCBI Taxonomy" id="878"/>
    <lineage>
        <taxon>Bacteria</taxon>
        <taxon>Pseudomonadati</taxon>
        <taxon>Thermodesulfobacteriota</taxon>
        <taxon>Desulfovibrionia</taxon>
        <taxon>Desulfovibrionales</taxon>
        <taxon>Desulfovibrionaceae</taxon>
        <taxon>Solidesulfovibrio</taxon>
    </lineage>
</organism>
<feature type="chain" id="PRO_0000418716" description="NADP-reducing hydrogenase subunit HndA">
    <location>
        <begin position="1"/>
        <end position="171"/>
    </location>
</feature>
<feature type="binding site" evidence="1">
    <location>
        <position position="98"/>
    </location>
    <ligand>
        <name>[2Fe-2S] cluster</name>
        <dbReference type="ChEBI" id="CHEBI:190135"/>
    </ligand>
</feature>
<feature type="binding site" evidence="1">
    <location>
        <position position="103"/>
    </location>
    <ligand>
        <name>[2Fe-2S] cluster</name>
        <dbReference type="ChEBI" id="CHEBI:190135"/>
    </ligand>
</feature>
<feature type="binding site" evidence="1">
    <location>
        <position position="139"/>
    </location>
    <ligand>
        <name>[2Fe-2S] cluster</name>
        <dbReference type="ChEBI" id="CHEBI:190135"/>
    </ligand>
</feature>
<feature type="binding site" evidence="1">
    <location>
        <position position="143"/>
    </location>
    <ligand>
        <name>[2Fe-2S] cluster</name>
        <dbReference type="ChEBI" id="CHEBI:190135"/>
    </ligand>
</feature>
<feature type="helix" evidence="6">
    <location>
        <begin position="101"/>
        <end position="104"/>
    </location>
</feature>
<feature type="turn" evidence="6">
    <location>
        <begin position="105"/>
        <end position="107"/>
    </location>
</feature>
<feature type="helix" evidence="6">
    <location>
        <begin position="108"/>
        <end position="119"/>
    </location>
</feature>
<feature type="strand" evidence="6">
    <location>
        <begin position="122"/>
        <end position="129"/>
    </location>
</feature>
<feature type="strand" evidence="6">
    <location>
        <begin position="135"/>
        <end position="142"/>
    </location>
</feature>
<feature type="helix" evidence="6">
    <location>
        <begin position="152"/>
        <end position="154"/>
    </location>
</feature>
<feature type="strand" evidence="6">
    <location>
        <begin position="159"/>
        <end position="162"/>
    </location>
</feature>
<feature type="helix" evidence="6">
    <location>
        <begin position="163"/>
        <end position="170"/>
    </location>
</feature>
<dbReference type="EC" id="1.12.1.3" evidence="4"/>
<dbReference type="EMBL" id="U07229">
    <property type="protein sequence ID" value="AAA87054.1"/>
    <property type="molecule type" value="Genomic_DNA"/>
</dbReference>
<dbReference type="PIR" id="A57150">
    <property type="entry name" value="A57150"/>
</dbReference>
<dbReference type="PDB" id="2AUV">
    <property type="method" value="NMR"/>
    <property type="chains" value="A=87-171"/>
</dbReference>
<dbReference type="PDBsum" id="2AUV"/>
<dbReference type="SMR" id="Q46505"/>
<dbReference type="KEGG" id="ag:AAA87054"/>
<dbReference type="EvolutionaryTrace" id="Q46505"/>
<dbReference type="GO" id="GO:0051537">
    <property type="term" value="F:2 iron, 2 sulfur cluster binding"/>
    <property type="evidence" value="ECO:0000314"/>
    <property type="project" value="UniProtKB"/>
</dbReference>
<dbReference type="GO" id="GO:0050583">
    <property type="term" value="F:hydrogen dehydrogenase (NADP+) activity"/>
    <property type="evidence" value="ECO:0000314"/>
    <property type="project" value="UniProtKB"/>
</dbReference>
<dbReference type="GO" id="GO:0046872">
    <property type="term" value="F:metal ion binding"/>
    <property type="evidence" value="ECO:0007669"/>
    <property type="project" value="UniProtKB-KW"/>
</dbReference>
<dbReference type="CDD" id="cd03064">
    <property type="entry name" value="TRX_Fd_NuoE"/>
    <property type="match status" value="1"/>
</dbReference>
<dbReference type="FunFam" id="1.10.10.1590:FF:000001">
    <property type="entry name" value="NADH-quinone oxidoreductase subunit E"/>
    <property type="match status" value="1"/>
</dbReference>
<dbReference type="FunFam" id="3.40.30.10:FF:000015">
    <property type="entry name" value="NADH-quinone oxidoreductase subunit E"/>
    <property type="match status" value="1"/>
</dbReference>
<dbReference type="Gene3D" id="3.40.30.10">
    <property type="entry name" value="Glutaredoxin"/>
    <property type="match status" value="1"/>
</dbReference>
<dbReference type="Gene3D" id="1.10.10.1590">
    <property type="entry name" value="NADH-quinone oxidoreductase subunit E"/>
    <property type="match status" value="1"/>
</dbReference>
<dbReference type="InterPro" id="IPR028431">
    <property type="entry name" value="NADP_DH_HndA-like"/>
</dbReference>
<dbReference type="InterPro" id="IPR002023">
    <property type="entry name" value="NuoE-like"/>
</dbReference>
<dbReference type="InterPro" id="IPR042128">
    <property type="entry name" value="NuoE_dom"/>
</dbReference>
<dbReference type="InterPro" id="IPR041921">
    <property type="entry name" value="NuoE_N"/>
</dbReference>
<dbReference type="InterPro" id="IPR036249">
    <property type="entry name" value="Thioredoxin-like_sf"/>
</dbReference>
<dbReference type="PANTHER" id="PTHR43342">
    <property type="entry name" value="NADH-QUINONE OXIDOREDUCTASE, E SUBUNIT"/>
    <property type="match status" value="1"/>
</dbReference>
<dbReference type="PANTHER" id="PTHR43342:SF2">
    <property type="entry name" value="POTENTIAL NAD-REDUCING HYDROGENASE SUBUNIT"/>
    <property type="match status" value="1"/>
</dbReference>
<dbReference type="Pfam" id="PF01257">
    <property type="entry name" value="2Fe-2S_thioredx"/>
    <property type="match status" value="1"/>
</dbReference>
<dbReference type="PIRSF" id="PIRSF000216">
    <property type="entry name" value="NADH_DH_24kDa"/>
    <property type="match status" value="1"/>
</dbReference>
<dbReference type="SUPFAM" id="SSF52833">
    <property type="entry name" value="Thioredoxin-like"/>
    <property type="match status" value="1"/>
</dbReference>
<gene>
    <name type="primary">hndA</name>
</gene>
<proteinExistence type="evidence at protein level"/>
<reference key="1">
    <citation type="journal article" date="1995" name="J. Bacteriol.">
        <title>Characterization of an operon encoding an NADP-reducing hydrogenase in Desulfovibrio fructosovorans.</title>
        <authorList>
            <person name="Malki S."/>
            <person name="Saimmaime I."/>
            <person name="De Luca G."/>
            <person name="Rousset M."/>
            <person name="Dermoun Z."/>
            <person name="Belaich J.P."/>
        </authorList>
    </citation>
    <scope>NUCLEOTIDE SEQUENCE [GENOMIC DNA]</scope>
    <scope>FUNCTION</scope>
</reference>
<reference key="2">
    <citation type="journal article" date="1998" name="Biochem. Biophys. Res. Commun.">
        <title>The NADP-reducing hydrogenase of Desulfovibrio fructosovorans: evidence for a native complex with hydrogen-dependent methyl-viologen-reducing activity.</title>
        <authorList>
            <person name="de Luca G."/>
            <person name="de Philip P."/>
            <person name="Rousset M."/>
            <person name="Belaich J.P."/>
            <person name="Dermoun Z."/>
        </authorList>
    </citation>
    <scope>FUNCTION</scope>
    <scope>CATALYTIC ACTIVITY</scope>
    <scope>BIOPHYSICOCHEMICAL PROPERTIES</scope>
    <scope>ACTIVITY REGULATION</scope>
    <scope>SUBUNIT</scope>
</reference>
<reference key="3">
    <citation type="journal article" date="2006" name="Protein Sci.">
        <title>Solution structure of HndAc: a thioredoxin-like domain involved in the NADP-reducing hydrogenase complex.</title>
        <authorList>
            <person name="Nouailler M."/>
            <person name="Morelli X."/>
            <person name="Bornet O."/>
            <person name="Chetrit B."/>
            <person name="Dermoun Z."/>
            <person name="Guerlesquin F."/>
        </authorList>
    </citation>
    <scope>STRUCTURE BY NMR OF 87-171 IN COMPLEX WITH IRON-SULFUR (2FE-2S)</scope>
    <scope>SUBUNIT</scope>
</reference>
<name>HNDA_SOLFR</name>
<protein>
    <recommendedName>
        <fullName>NADP-reducing hydrogenase subunit HndA</fullName>
        <ecNumber evidence="4">1.12.1.3</ecNumber>
    </recommendedName>
    <alternativeName>
        <fullName>Hydrogen dehydrogenase (NADP(+))</fullName>
    </alternativeName>
</protein>
<evidence type="ECO:0000250" key="1"/>
<evidence type="ECO:0000269" key="2">
    <source>
    </source>
</evidence>
<evidence type="ECO:0000269" key="3">
    <source>
    </source>
</evidence>
<evidence type="ECO:0000269" key="4">
    <source>
    </source>
</evidence>
<evidence type="ECO:0000305" key="5"/>
<evidence type="ECO:0007829" key="6">
    <source>
        <dbReference type="PDB" id="2AUV"/>
    </source>
</evidence>